<feature type="chain" id="PRO_0000337380" description="Elongation factor Tu">
    <location>
        <begin position="1"/>
        <end position="394"/>
    </location>
</feature>
<feature type="domain" description="tr-type G">
    <location>
        <begin position="10"/>
        <end position="204"/>
    </location>
</feature>
<feature type="region of interest" description="G1" evidence="1">
    <location>
        <begin position="19"/>
        <end position="26"/>
    </location>
</feature>
<feature type="region of interest" description="G2" evidence="1">
    <location>
        <begin position="60"/>
        <end position="64"/>
    </location>
</feature>
<feature type="region of interest" description="G3" evidence="1">
    <location>
        <begin position="81"/>
        <end position="84"/>
    </location>
</feature>
<feature type="region of interest" description="G4" evidence="1">
    <location>
        <begin position="136"/>
        <end position="139"/>
    </location>
</feature>
<feature type="region of interest" description="G5" evidence="1">
    <location>
        <begin position="174"/>
        <end position="176"/>
    </location>
</feature>
<feature type="binding site" evidence="2">
    <location>
        <begin position="19"/>
        <end position="26"/>
    </location>
    <ligand>
        <name>GTP</name>
        <dbReference type="ChEBI" id="CHEBI:37565"/>
    </ligand>
</feature>
<feature type="binding site" evidence="2">
    <location>
        <position position="26"/>
    </location>
    <ligand>
        <name>Mg(2+)</name>
        <dbReference type="ChEBI" id="CHEBI:18420"/>
    </ligand>
</feature>
<feature type="binding site" evidence="2">
    <location>
        <begin position="81"/>
        <end position="85"/>
    </location>
    <ligand>
        <name>GTP</name>
        <dbReference type="ChEBI" id="CHEBI:37565"/>
    </ligand>
</feature>
<feature type="binding site" evidence="2">
    <location>
        <begin position="136"/>
        <end position="139"/>
    </location>
    <ligand>
        <name>GTP</name>
        <dbReference type="ChEBI" id="CHEBI:37565"/>
    </ligand>
</feature>
<dbReference type="EC" id="3.6.5.3" evidence="2"/>
<dbReference type="EMBL" id="CP000653">
    <property type="protein sequence ID" value="ABP58880.1"/>
    <property type="molecule type" value="Genomic_DNA"/>
</dbReference>
<dbReference type="EMBL" id="CP000653">
    <property type="protein sequence ID" value="ABP62412.1"/>
    <property type="molecule type" value="Genomic_DNA"/>
</dbReference>
<dbReference type="RefSeq" id="WP_011915455.1">
    <property type="nucleotide sequence ID" value="NC_009436.1"/>
</dbReference>
<dbReference type="SMR" id="A4W5A0"/>
<dbReference type="STRING" id="399742.Ent638_0190"/>
<dbReference type="KEGG" id="ent:Ent638_0190"/>
<dbReference type="KEGG" id="ent:Ent638_3756"/>
<dbReference type="eggNOG" id="COG0050">
    <property type="taxonomic scope" value="Bacteria"/>
</dbReference>
<dbReference type="HOGENOM" id="CLU_007265_0_2_6"/>
<dbReference type="OrthoDB" id="9803139at2"/>
<dbReference type="Proteomes" id="UP000000230">
    <property type="component" value="Chromosome"/>
</dbReference>
<dbReference type="GO" id="GO:0005829">
    <property type="term" value="C:cytosol"/>
    <property type="evidence" value="ECO:0007669"/>
    <property type="project" value="TreeGrafter"/>
</dbReference>
<dbReference type="GO" id="GO:0005525">
    <property type="term" value="F:GTP binding"/>
    <property type="evidence" value="ECO:0007669"/>
    <property type="project" value="UniProtKB-UniRule"/>
</dbReference>
<dbReference type="GO" id="GO:0003924">
    <property type="term" value="F:GTPase activity"/>
    <property type="evidence" value="ECO:0007669"/>
    <property type="project" value="InterPro"/>
</dbReference>
<dbReference type="GO" id="GO:0097216">
    <property type="term" value="F:guanosine tetraphosphate binding"/>
    <property type="evidence" value="ECO:0007669"/>
    <property type="project" value="UniProtKB-ARBA"/>
</dbReference>
<dbReference type="GO" id="GO:0003746">
    <property type="term" value="F:translation elongation factor activity"/>
    <property type="evidence" value="ECO:0007669"/>
    <property type="project" value="UniProtKB-UniRule"/>
</dbReference>
<dbReference type="CDD" id="cd01884">
    <property type="entry name" value="EF_Tu"/>
    <property type="match status" value="1"/>
</dbReference>
<dbReference type="CDD" id="cd03697">
    <property type="entry name" value="EFTU_II"/>
    <property type="match status" value="1"/>
</dbReference>
<dbReference type="CDD" id="cd03707">
    <property type="entry name" value="EFTU_III"/>
    <property type="match status" value="1"/>
</dbReference>
<dbReference type="FunFam" id="2.40.30.10:FF:000001">
    <property type="entry name" value="Elongation factor Tu"/>
    <property type="match status" value="1"/>
</dbReference>
<dbReference type="FunFam" id="3.40.50.300:FF:000003">
    <property type="entry name" value="Elongation factor Tu"/>
    <property type="match status" value="1"/>
</dbReference>
<dbReference type="Gene3D" id="3.40.50.300">
    <property type="entry name" value="P-loop containing nucleotide triphosphate hydrolases"/>
    <property type="match status" value="1"/>
</dbReference>
<dbReference type="Gene3D" id="2.40.30.10">
    <property type="entry name" value="Translation factors"/>
    <property type="match status" value="2"/>
</dbReference>
<dbReference type="HAMAP" id="MF_00118_B">
    <property type="entry name" value="EF_Tu_B"/>
    <property type="match status" value="1"/>
</dbReference>
<dbReference type="InterPro" id="IPR041709">
    <property type="entry name" value="EF-Tu_GTP-bd"/>
</dbReference>
<dbReference type="InterPro" id="IPR050055">
    <property type="entry name" value="EF-Tu_GTPase"/>
</dbReference>
<dbReference type="InterPro" id="IPR004161">
    <property type="entry name" value="EFTu-like_2"/>
</dbReference>
<dbReference type="InterPro" id="IPR033720">
    <property type="entry name" value="EFTU_2"/>
</dbReference>
<dbReference type="InterPro" id="IPR031157">
    <property type="entry name" value="G_TR_CS"/>
</dbReference>
<dbReference type="InterPro" id="IPR027417">
    <property type="entry name" value="P-loop_NTPase"/>
</dbReference>
<dbReference type="InterPro" id="IPR005225">
    <property type="entry name" value="Small_GTP-bd"/>
</dbReference>
<dbReference type="InterPro" id="IPR000795">
    <property type="entry name" value="T_Tr_GTP-bd_dom"/>
</dbReference>
<dbReference type="InterPro" id="IPR009000">
    <property type="entry name" value="Transl_B-barrel_sf"/>
</dbReference>
<dbReference type="InterPro" id="IPR009001">
    <property type="entry name" value="Transl_elong_EF1A/Init_IF2_C"/>
</dbReference>
<dbReference type="InterPro" id="IPR004541">
    <property type="entry name" value="Transl_elong_EFTu/EF1A_bac/org"/>
</dbReference>
<dbReference type="InterPro" id="IPR004160">
    <property type="entry name" value="Transl_elong_EFTu/EF1A_C"/>
</dbReference>
<dbReference type="NCBIfam" id="TIGR00485">
    <property type="entry name" value="EF-Tu"/>
    <property type="match status" value="1"/>
</dbReference>
<dbReference type="NCBIfam" id="NF000766">
    <property type="entry name" value="PRK00049.1"/>
    <property type="match status" value="1"/>
</dbReference>
<dbReference type="NCBIfam" id="NF009372">
    <property type="entry name" value="PRK12735.1"/>
    <property type="match status" value="1"/>
</dbReference>
<dbReference type="NCBIfam" id="NF009373">
    <property type="entry name" value="PRK12736.1"/>
    <property type="match status" value="1"/>
</dbReference>
<dbReference type="NCBIfam" id="TIGR00231">
    <property type="entry name" value="small_GTP"/>
    <property type="match status" value="1"/>
</dbReference>
<dbReference type="PANTHER" id="PTHR43721:SF22">
    <property type="entry name" value="ELONGATION FACTOR TU, MITOCHONDRIAL"/>
    <property type="match status" value="1"/>
</dbReference>
<dbReference type="PANTHER" id="PTHR43721">
    <property type="entry name" value="ELONGATION FACTOR TU-RELATED"/>
    <property type="match status" value="1"/>
</dbReference>
<dbReference type="Pfam" id="PF00009">
    <property type="entry name" value="GTP_EFTU"/>
    <property type="match status" value="1"/>
</dbReference>
<dbReference type="Pfam" id="PF03144">
    <property type="entry name" value="GTP_EFTU_D2"/>
    <property type="match status" value="1"/>
</dbReference>
<dbReference type="Pfam" id="PF03143">
    <property type="entry name" value="GTP_EFTU_D3"/>
    <property type="match status" value="1"/>
</dbReference>
<dbReference type="PRINTS" id="PR00315">
    <property type="entry name" value="ELONGATNFCT"/>
</dbReference>
<dbReference type="SUPFAM" id="SSF50465">
    <property type="entry name" value="EF-Tu/eEF-1alpha/eIF2-gamma C-terminal domain"/>
    <property type="match status" value="1"/>
</dbReference>
<dbReference type="SUPFAM" id="SSF52540">
    <property type="entry name" value="P-loop containing nucleoside triphosphate hydrolases"/>
    <property type="match status" value="1"/>
</dbReference>
<dbReference type="SUPFAM" id="SSF50447">
    <property type="entry name" value="Translation proteins"/>
    <property type="match status" value="1"/>
</dbReference>
<dbReference type="PROSITE" id="PS00301">
    <property type="entry name" value="G_TR_1"/>
    <property type="match status" value="1"/>
</dbReference>
<dbReference type="PROSITE" id="PS51722">
    <property type="entry name" value="G_TR_2"/>
    <property type="match status" value="1"/>
</dbReference>
<keyword id="KW-0963">Cytoplasm</keyword>
<keyword id="KW-0251">Elongation factor</keyword>
<keyword id="KW-0342">GTP-binding</keyword>
<keyword id="KW-0378">Hydrolase</keyword>
<keyword id="KW-0460">Magnesium</keyword>
<keyword id="KW-0479">Metal-binding</keyword>
<keyword id="KW-0547">Nucleotide-binding</keyword>
<keyword id="KW-0648">Protein biosynthesis</keyword>
<gene>
    <name evidence="2" type="primary">tuf1</name>
    <name type="ordered locus">Ent638_0190</name>
</gene>
<gene>
    <name evidence="2" type="primary">tuf2</name>
    <name type="ordered locus">Ent638_3756</name>
</gene>
<reference key="1">
    <citation type="journal article" date="2010" name="PLoS Genet.">
        <title>Genome sequence of the plant growth promoting endophytic bacterium Enterobacter sp. 638.</title>
        <authorList>
            <person name="Taghavi S."/>
            <person name="van der Lelie D."/>
            <person name="Hoffman A."/>
            <person name="Zhang Y.B."/>
            <person name="Walla M.D."/>
            <person name="Vangronsveld J."/>
            <person name="Newman L."/>
            <person name="Monchy S."/>
        </authorList>
    </citation>
    <scope>NUCLEOTIDE SEQUENCE [LARGE SCALE GENOMIC DNA]</scope>
    <source>
        <strain>638</strain>
    </source>
</reference>
<name>EFTU_ENT38</name>
<protein>
    <recommendedName>
        <fullName evidence="2">Elongation factor Tu</fullName>
        <shortName evidence="2">EF-Tu</shortName>
        <ecNumber evidence="2">3.6.5.3</ecNumber>
    </recommendedName>
</protein>
<organism>
    <name type="scientific">Enterobacter sp. (strain 638)</name>
    <dbReference type="NCBI Taxonomy" id="399742"/>
    <lineage>
        <taxon>Bacteria</taxon>
        <taxon>Pseudomonadati</taxon>
        <taxon>Pseudomonadota</taxon>
        <taxon>Gammaproteobacteria</taxon>
        <taxon>Enterobacterales</taxon>
        <taxon>Enterobacteriaceae</taxon>
        <taxon>Enterobacter</taxon>
    </lineage>
</organism>
<evidence type="ECO:0000250" key="1"/>
<evidence type="ECO:0000255" key="2">
    <source>
        <dbReference type="HAMAP-Rule" id="MF_00118"/>
    </source>
</evidence>
<comment type="function">
    <text evidence="2">GTP hydrolase that promotes the GTP-dependent binding of aminoacyl-tRNA to the A-site of ribosomes during protein biosynthesis.</text>
</comment>
<comment type="catalytic activity">
    <reaction evidence="2">
        <text>GTP + H2O = GDP + phosphate + H(+)</text>
        <dbReference type="Rhea" id="RHEA:19669"/>
        <dbReference type="ChEBI" id="CHEBI:15377"/>
        <dbReference type="ChEBI" id="CHEBI:15378"/>
        <dbReference type="ChEBI" id="CHEBI:37565"/>
        <dbReference type="ChEBI" id="CHEBI:43474"/>
        <dbReference type="ChEBI" id="CHEBI:58189"/>
        <dbReference type="EC" id="3.6.5.3"/>
    </reaction>
    <physiologicalReaction direction="left-to-right" evidence="2">
        <dbReference type="Rhea" id="RHEA:19670"/>
    </physiologicalReaction>
</comment>
<comment type="subunit">
    <text evidence="2">Monomer.</text>
</comment>
<comment type="subcellular location">
    <subcellularLocation>
        <location evidence="2">Cytoplasm</location>
    </subcellularLocation>
</comment>
<comment type="similarity">
    <text evidence="2">Belongs to the TRAFAC class translation factor GTPase superfamily. Classic translation factor GTPase family. EF-Tu/EF-1A subfamily.</text>
</comment>
<proteinExistence type="inferred from homology"/>
<accession>A4W5A0</accession>
<sequence length="394" mass="43244">MSKEKFERTKPHVNVGTIGHVDHGKTTLTAAITTVLAKTYGGSARAFDQIDNAPEEKARGITINTSHVEYDTPSRHYAHVDCPGHADYVKNMITGAAQMDGAILVVAATDGPMPQTREHILLGRQVGVPFIIVFLNKCDMVDDEELLELVEMEVRELLSQYDFPGDDTPIIRGSALKALEGEAEWEAKIVELAGYLDSYIPEPERAIDKPFLLPIEDVFSISGRGTVVTGRVERGIVKVGEEVEIVGIKETAKSTCTGVEMFRKLLDEGRAGENVGVLLRGIKREEIERGQVLAKPGSIKPHTKFESEVYILSKDEGGRHTPFFKGYRPQFYFRTTDVTGTIELPEGVEMVMPGDNIQMVVTLIHPIAMDDGLRFAIREGGRTVGAGVVAKVIS</sequence>